<evidence type="ECO:0000250" key="1"/>
<evidence type="ECO:0000255" key="2"/>
<evidence type="ECO:0000305" key="3"/>
<gene>
    <name type="primary">HEMA2</name>
</gene>
<name>HEM12_CUCSA</name>
<organism>
    <name type="scientific">Cucumis sativus</name>
    <name type="common">Cucumber</name>
    <dbReference type="NCBI Taxonomy" id="3659"/>
    <lineage>
        <taxon>Eukaryota</taxon>
        <taxon>Viridiplantae</taxon>
        <taxon>Streptophyta</taxon>
        <taxon>Embryophyta</taxon>
        <taxon>Tracheophyta</taxon>
        <taxon>Spermatophyta</taxon>
        <taxon>Magnoliopsida</taxon>
        <taxon>eudicotyledons</taxon>
        <taxon>Gunneridae</taxon>
        <taxon>Pentapetalae</taxon>
        <taxon>rosids</taxon>
        <taxon>fabids</taxon>
        <taxon>Cucurbitales</taxon>
        <taxon>Cucurbitaceae</taxon>
        <taxon>Benincaseae</taxon>
        <taxon>Cucumis</taxon>
    </lineage>
</organism>
<proteinExistence type="evidence at transcript level"/>
<comment type="function">
    <text evidence="1">Catalyzes the NADPH-dependent reduction of glutamyl-tRNA(Glu) to glutamate 1-semialdehyde (GSA).</text>
</comment>
<comment type="catalytic activity">
    <reaction>
        <text>(S)-4-amino-5-oxopentanoate + tRNA(Glu) + NADP(+) = L-glutamyl-tRNA(Glu) + NADPH + H(+)</text>
        <dbReference type="Rhea" id="RHEA:12344"/>
        <dbReference type="Rhea" id="RHEA-COMP:9663"/>
        <dbReference type="Rhea" id="RHEA-COMP:9680"/>
        <dbReference type="ChEBI" id="CHEBI:15378"/>
        <dbReference type="ChEBI" id="CHEBI:57501"/>
        <dbReference type="ChEBI" id="CHEBI:57783"/>
        <dbReference type="ChEBI" id="CHEBI:58349"/>
        <dbReference type="ChEBI" id="CHEBI:78442"/>
        <dbReference type="ChEBI" id="CHEBI:78520"/>
        <dbReference type="EC" id="1.2.1.70"/>
    </reaction>
</comment>
<comment type="pathway">
    <text>Porphyrin-containing compound metabolism; protoporphyrin-IX biosynthesis; 5-aminolevulinate from L-glutamyl-tRNA(Glu): step 1/2.</text>
</comment>
<comment type="subcellular location">
    <subcellularLocation>
        <location evidence="1">Plastid</location>
        <location evidence="1">Chloroplast</location>
    </subcellularLocation>
</comment>
<comment type="tissue specificity">
    <text>Found in all tissues examined.</text>
</comment>
<comment type="miscellaneous">
    <text evidence="1">During catalysis, the active site Cys acts as a nucleophile attacking the alpha-carbonyl group of tRNA-bound glutamate with the formation of a thioester intermediate between enzyme and glutamate, and the concomitant release of tRNA(Glu). The thioester intermediate is finally reduced by direct hydride transfer from NADPH, to form the product GSA (By similarity).</text>
</comment>
<comment type="similarity">
    <text evidence="3">Belongs to the glutamyl-tRNA reductase family.</text>
</comment>
<sequence length="542" mass="59707">MAAAVGGLTTCFARPTPEFIAPSTSYSAPVRVFFKPFKVRDLCCAGEVVGVLSARSIPISPRFELIRLVRMQPGLSALELLKTSSVNRYTKERISIVVIGLNVHTAPVELREKLAIPEAQWPPGIGELCALNHIEEAAVLSTCNRIEIYVVALSQHRGVKEVTEWMSKRSGIPISELCKHRVLLYNTDATQHLFEVSAGLDSLVLGEGQILAQVKHVVKTGQGVAGFDRKISGLFKHAITVGKRVRTETNISSGSFSVSSAAVELAQKKLPESSYATAKVMVVGAGKMGKLVIKHLVAKGCRKMVVVNRTQDSVDAVEELKDVEIIYKPLSKILACASEADVIFTCTASKTPLFTKEHVAMLPPAGTETGRRLFVDISVPRNVEQRVSDLETVSVFNVDDLKEVVAANKEDRLKKVQEAQSIIGEEINKFEAWRDSLETVPTIKKFRAYVERIRAAELDKCLSKMGEDIPKKKKVAINDLSLGIANKLLHGPIQHLRCDGNDSRTLDEILQNMHAINRMFDLETDLSVLEEKIRAKVERGQK</sequence>
<accession>P49295</accession>
<protein>
    <recommendedName>
        <fullName>Glutamyl-tRNA reductase 2, chloroplastic</fullName>
        <shortName>GluTR</shortName>
        <ecNumber>1.2.1.70</ecNumber>
    </recommendedName>
</protein>
<feature type="transit peptide" description="Chloroplast" evidence="2">
    <location>
        <begin position="1"/>
        <end status="unknown"/>
    </location>
</feature>
<feature type="chain" id="PRO_0000013310" description="Glutamyl-tRNA reductase 2, chloroplastic">
    <location>
        <begin status="unknown"/>
        <end position="542"/>
    </location>
</feature>
<feature type="active site" description="Nucleophile" evidence="1">
    <location>
        <position position="143"/>
    </location>
</feature>
<feature type="binding site" evidence="1">
    <location>
        <begin position="142"/>
        <end position="145"/>
    </location>
    <ligand>
        <name>substrate</name>
    </ligand>
</feature>
<feature type="binding site" evidence="1">
    <location>
        <position position="202"/>
    </location>
    <ligand>
        <name>substrate</name>
    </ligand>
</feature>
<feature type="binding site" evidence="1">
    <location>
        <begin position="207"/>
        <end position="209"/>
    </location>
    <ligand>
        <name>substrate</name>
    </ligand>
</feature>
<feature type="binding site" evidence="1">
    <location>
        <position position="213"/>
    </location>
    <ligand>
        <name>substrate</name>
    </ligand>
</feature>
<feature type="binding site" evidence="1">
    <location>
        <begin position="284"/>
        <end position="289"/>
    </location>
    <ligand>
        <name>NADP(+)</name>
        <dbReference type="ChEBI" id="CHEBI:58349"/>
    </ligand>
</feature>
<feature type="site" description="Important for activity" evidence="1">
    <location>
        <position position="192"/>
    </location>
</feature>
<keyword id="KW-0149">Chlorophyll biosynthesis</keyword>
<keyword id="KW-0150">Chloroplast</keyword>
<keyword id="KW-0521">NADP</keyword>
<keyword id="KW-0560">Oxidoreductase</keyword>
<keyword id="KW-0934">Plastid</keyword>
<keyword id="KW-0627">Porphyrin biosynthesis</keyword>
<keyword id="KW-0809">Transit peptide</keyword>
<dbReference type="EC" id="1.2.1.70"/>
<dbReference type="EMBL" id="D67088">
    <property type="protein sequence ID" value="BAA11091.1"/>
    <property type="molecule type" value="mRNA"/>
</dbReference>
<dbReference type="PIR" id="T10245">
    <property type="entry name" value="T10245"/>
</dbReference>
<dbReference type="RefSeq" id="NP_001267616.1">
    <property type="nucleotide sequence ID" value="NM_001280687.1"/>
</dbReference>
<dbReference type="SMR" id="P49295"/>
<dbReference type="GeneID" id="101208135"/>
<dbReference type="KEGG" id="csv:101208135"/>
<dbReference type="eggNOG" id="ENOG502QQ1H">
    <property type="taxonomic scope" value="Eukaryota"/>
</dbReference>
<dbReference type="OrthoDB" id="424281at2759"/>
<dbReference type="UniPathway" id="UPA00251">
    <property type="reaction ID" value="UER00316"/>
</dbReference>
<dbReference type="GO" id="GO:0009507">
    <property type="term" value="C:chloroplast"/>
    <property type="evidence" value="ECO:0007669"/>
    <property type="project" value="UniProtKB-SubCell"/>
</dbReference>
<dbReference type="GO" id="GO:0008883">
    <property type="term" value="F:glutamyl-tRNA reductase activity"/>
    <property type="evidence" value="ECO:0007669"/>
    <property type="project" value="UniProtKB-EC"/>
</dbReference>
<dbReference type="GO" id="GO:0050661">
    <property type="term" value="F:NADP binding"/>
    <property type="evidence" value="ECO:0007669"/>
    <property type="project" value="InterPro"/>
</dbReference>
<dbReference type="GO" id="GO:0015995">
    <property type="term" value="P:chlorophyll biosynthetic process"/>
    <property type="evidence" value="ECO:0007669"/>
    <property type="project" value="UniProtKB-KW"/>
</dbReference>
<dbReference type="GO" id="GO:0006782">
    <property type="term" value="P:protoporphyrinogen IX biosynthetic process"/>
    <property type="evidence" value="ECO:0007669"/>
    <property type="project" value="UniProtKB-UniPathway"/>
</dbReference>
<dbReference type="CDD" id="cd05213">
    <property type="entry name" value="NAD_bind_Glutamyl_tRNA_reduct"/>
    <property type="match status" value="1"/>
</dbReference>
<dbReference type="FunFam" id="3.30.460.30:FF:000001">
    <property type="entry name" value="Glutamyl-tRNA reductase"/>
    <property type="match status" value="1"/>
</dbReference>
<dbReference type="FunFam" id="3.40.50.720:FF:000031">
    <property type="entry name" value="Glutamyl-tRNA reductase"/>
    <property type="match status" value="1"/>
</dbReference>
<dbReference type="Gene3D" id="3.30.460.30">
    <property type="entry name" value="Glutamyl-tRNA reductase, N-terminal domain"/>
    <property type="match status" value="1"/>
</dbReference>
<dbReference type="Gene3D" id="3.40.50.720">
    <property type="entry name" value="NAD(P)-binding Rossmann-like Domain"/>
    <property type="match status" value="1"/>
</dbReference>
<dbReference type="HAMAP" id="MF_00087">
    <property type="entry name" value="Glu_tRNA_reductase"/>
    <property type="match status" value="1"/>
</dbReference>
<dbReference type="InterPro" id="IPR000343">
    <property type="entry name" value="4pyrrol_synth_GluRdtase"/>
</dbReference>
<dbReference type="InterPro" id="IPR015896">
    <property type="entry name" value="4pyrrol_synth_GluRdtase_dimer"/>
</dbReference>
<dbReference type="InterPro" id="IPR015895">
    <property type="entry name" value="4pyrrol_synth_GluRdtase_N"/>
</dbReference>
<dbReference type="InterPro" id="IPR018214">
    <property type="entry name" value="GluRdtase_CS"/>
</dbReference>
<dbReference type="InterPro" id="IPR036453">
    <property type="entry name" value="GluRdtase_dimer_dom_sf"/>
</dbReference>
<dbReference type="InterPro" id="IPR036343">
    <property type="entry name" value="GluRdtase_N_sf"/>
</dbReference>
<dbReference type="InterPro" id="IPR036291">
    <property type="entry name" value="NAD(P)-bd_dom_sf"/>
</dbReference>
<dbReference type="InterPro" id="IPR006151">
    <property type="entry name" value="Shikm_DH/Glu-tRNA_Rdtase"/>
</dbReference>
<dbReference type="NCBIfam" id="TIGR01035">
    <property type="entry name" value="hemA"/>
    <property type="match status" value="1"/>
</dbReference>
<dbReference type="PANTHER" id="PTHR43120:SF4">
    <property type="entry name" value="GLUTAMYL-TRNA REDUCTASE"/>
    <property type="match status" value="1"/>
</dbReference>
<dbReference type="PANTHER" id="PTHR43120">
    <property type="entry name" value="GLUTAMYL-TRNA REDUCTASE 1, CHLOROPLASTIC"/>
    <property type="match status" value="1"/>
</dbReference>
<dbReference type="Pfam" id="PF00745">
    <property type="entry name" value="GlutR_dimer"/>
    <property type="match status" value="1"/>
</dbReference>
<dbReference type="Pfam" id="PF05201">
    <property type="entry name" value="GlutR_N"/>
    <property type="match status" value="1"/>
</dbReference>
<dbReference type="Pfam" id="PF01488">
    <property type="entry name" value="Shikimate_DH"/>
    <property type="match status" value="1"/>
</dbReference>
<dbReference type="SUPFAM" id="SSF69742">
    <property type="entry name" value="Glutamyl tRNA-reductase catalytic, N-terminal domain"/>
    <property type="match status" value="1"/>
</dbReference>
<dbReference type="SUPFAM" id="SSF69075">
    <property type="entry name" value="Glutamyl tRNA-reductase dimerization domain"/>
    <property type="match status" value="1"/>
</dbReference>
<dbReference type="SUPFAM" id="SSF51735">
    <property type="entry name" value="NAD(P)-binding Rossmann-fold domains"/>
    <property type="match status" value="1"/>
</dbReference>
<dbReference type="PROSITE" id="PS00747">
    <property type="entry name" value="GLUTR"/>
    <property type="match status" value="1"/>
</dbReference>
<reference key="1">
    <citation type="journal article" date="1996" name="Plant Physiol.">
        <title>Differential expression of two hemA mRNAs encoding glutamyl-tRNA reductase proteins in greening cucumber seedlings.</title>
        <authorList>
            <person name="Tanaka R."/>
            <person name="Yoshida K."/>
            <person name="Nakayashiki T."/>
            <person name="Masuda T."/>
            <person name="Tsuji H."/>
            <person name="Inokuchi H."/>
            <person name="Tanaka A."/>
        </authorList>
    </citation>
    <scope>NUCLEOTIDE SEQUENCE [MRNA]</scope>
    <source>
        <strain>cv. Aonagajibai</strain>
        <tissue>Cotyledon</tissue>
    </source>
</reference>